<evidence type="ECO:0000255" key="1">
    <source>
        <dbReference type="HAMAP-Rule" id="MF_00244"/>
    </source>
</evidence>
<feature type="chain" id="PRO_0000336746" description="Probable nicotinate-nucleotide adenylyltransferase">
    <location>
        <begin position="1"/>
        <end position="186"/>
    </location>
</feature>
<proteinExistence type="inferred from homology"/>
<protein>
    <recommendedName>
        <fullName evidence="1">Probable nicotinate-nucleotide adenylyltransferase</fullName>
        <ecNumber evidence="1">2.7.7.18</ecNumber>
    </recommendedName>
    <alternativeName>
        <fullName evidence="1">Deamido-NAD(+) diphosphorylase</fullName>
    </alternativeName>
    <alternativeName>
        <fullName evidence="1">Deamido-NAD(+) pyrophosphorylase</fullName>
    </alternativeName>
    <alternativeName>
        <fullName evidence="1">Nicotinate mononucleotide adenylyltransferase</fullName>
        <shortName evidence="1">NaMN adenylyltransferase</shortName>
    </alternativeName>
</protein>
<keyword id="KW-0067">ATP-binding</keyword>
<keyword id="KW-0520">NAD</keyword>
<keyword id="KW-0547">Nucleotide-binding</keyword>
<keyword id="KW-0548">Nucleotidyltransferase</keyword>
<keyword id="KW-0662">Pyridine nucleotide biosynthesis</keyword>
<keyword id="KW-1185">Reference proteome</keyword>
<keyword id="KW-0808">Transferase</keyword>
<sequence>MRIGLFGGSFDPIHLGHLLAASQAQEVLCLDRVLFVVAARPPHKVPVAPAEARYEMTLLAVAEDPRFTVSRLELDRPGPSYTVDTLREARRLFPQDELFFITGADAYRDVLTWKEGERLPEYATLVAVARPGYPLEEAPLPVVPLFVPEVGISSTEIRRRLKEGRSVRYWVPRAVEVYIEKHGLYR</sequence>
<dbReference type="EC" id="2.7.7.18" evidence="1"/>
<dbReference type="EMBL" id="AP008226">
    <property type="protein sequence ID" value="BAD71603.1"/>
    <property type="molecule type" value="Genomic_DNA"/>
</dbReference>
<dbReference type="RefSeq" id="WP_011228912.1">
    <property type="nucleotide sequence ID" value="NC_006461.1"/>
</dbReference>
<dbReference type="RefSeq" id="YP_145046.1">
    <property type="nucleotide sequence ID" value="NC_006461.1"/>
</dbReference>
<dbReference type="SMR" id="Q5SHF0"/>
<dbReference type="EnsemblBacteria" id="BAD71603">
    <property type="protein sequence ID" value="BAD71603"/>
    <property type="gene ID" value="BAD71603"/>
</dbReference>
<dbReference type="GeneID" id="3169470"/>
<dbReference type="KEGG" id="ttj:TTHA1780"/>
<dbReference type="PATRIC" id="fig|300852.9.peg.1750"/>
<dbReference type="eggNOG" id="COG1057">
    <property type="taxonomic scope" value="Bacteria"/>
</dbReference>
<dbReference type="HOGENOM" id="CLU_069765_1_1_0"/>
<dbReference type="PhylomeDB" id="Q5SHF0"/>
<dbReference type="BRENDA" id="2.7.7.1">
    <property type="organism ID" value="2305"/>
</dbReference>
<dbReference type="BRENDA" id="2.7.7.18">
    <property type="organism ID" value="2305"/>
</dbReference>
<dbReference type="UniPathway" id="UPA00253">
    <property type="reaction ID" value="UER00332"/>
</dbReference>
<dbReference type="Proteomes" id="UP000000532">
    <property type="component" value="Chromosome"/>
</dbReference>
<dbReference type="GO" id="GO:0005524">
    <property type="term" value="F:ATP binding"/>
    <property type="evidence" value="ECO:0007669"/>
    <property type="project" value="UniProtKB-KW"/>
</dbReference>
<dbReference type="GO" id="GO:0004515">
    <property type="term" value="F:nicotinate-nucleotide adenylyltransferase activity"/>
    <property type="evidence" value="ECO:0007669"/>
    <property type="project" value="UniProtKB-UniRule"/>
</dbReference>
<dbReference type="GO" id="GO:0009435">
    <property type="term" value="P:NAD biosynthetic process"/>
    <property type="evidence" value="ECO:0007669"/>
    <property type="project" value="UniProtKB-UniRule"/>
</dbReference>
<dbReference type="CDD" id="cd02165">
    <property type="entry name" value="NMNAT"/>
    <property type="match status" value="1"/>
</dbReference>
<dbReference type="Gene3D" id="3.40.50.620">
    <property type="entry name" value="HUPs"/>
    <property type="match status" value="1"/>
</dbReference>
<dbReference type="HAMAP" id="MF_00244">
    <property type="entry name" value="NaMN_adenylyltr"/>
    <property type="match status" value="1"/>
</dbReference>
<dbReference type="InterPro" id="IPR004821">
    <property type="entry name" value="Cyt_trans-like"/>
</dbReference>
<dbReference type="InterPro" id="IPR005248">
    <property type="entry name" value="NadD/NMNAT"/>
</dbReference>
<dbReference type="InterPro" id="IPR014729">
    <property type="entry name" value="Rossmann-like_a/b/a_fold"/>
</dbReference>
<dbReference type="NCBIfam" id="TIGR00125">
    <property type="entry name" value="cyt_tran_rel"/>
    <property type="match status" value="1"/>
</dbReference>
<dbReference type="NCBIfam" id="TIGR00482">
    <property type="entry name" value="nicotinate (nicotinamide) nucleotide adenylyltransferase"/>
    <property type="match status" value="1"/>
</dbReference>
<dbReference type="NCBIfam" id="NF000840">
    <property type="entry name" value="PRK00071.1-3"/>
    <property type="match status" value="1"/>
</dbReference>
<dbReference type="PANTHER" id="PTHR39321">
    <property type="entry name" value="NICOTINATE-NUCLEOTIDE ADENYLYLTRANSFERASE-RELATED"/>
    <property type="match status" value="1"/>
</dbReference>
<dbReference type="PANTHER" id="PTHR39321:SF3">
    <property type="entry name" value="PHOSPHOPANTETHEINE ADENYLYLTRANSFERASE"/>
    <property type="match status" value="1"/>
</dbReference>
<dbReference type="Pfam" id="PF01467">
    <property type="entry name" value="CTP_transf_like"/>
    <property type="match status" value="1"/>
</dbReference>
<dbReference type="SUPFAM" id="SSF52374">
    <property type="entry name" value="Nucleotidylyl transferase"/>
    <property type="match status" value="1"/>
</dbReference>
<reference key="1">
    <citation type="submission" date="2004-11" db="EMBL/GenBank/DDBJ databases">
        <title>Complete genome sequence of Thermus thermophilus HB8.</title>
        <authorList>
            <person name="Masui R."/>
            <person name="Kurokawa K."/>
            <person name="Nakagawa N."/>
            <person name="Tokunaga F."/>
            <person name="Koyama Y."/>
            <person name="Shibata T."/>
            <person name="Oshima T."/>
            <person name="Yokoyama S."/>
            <person name="Yasunaga T."/>
            <person name="Kuramitsu S."/>
        </authorList>
    </citation>
    <scope>NUCLEOTIDE SEQUENCE [LARGE SCALE GENOMIC DNA]</scope>
    <source>
        <strain>ATCC 27634 / DSM 579 / HB8</strain>
    </source>
</reference>
<gene>
    <name evidence="1" type="primary">nadD</name>
    <name type="ordered locus">TTHA1780</name>
</gene>
<organism>
    <name type="scientific">Thermus thermophilus (strain ATCC 27634 / DSM 579 / HB8)</name>
    <dbReference type="NCBI Taxonomy" id="300852"/>
    <lineage>
        <taxon>Bacteria</taxon>
        <taxon>Thermotogati</taxon>
        <taxon>Deinococcota</taxon>
        <taxon>Deinococci</taxon>
        <taxon>Thermales</taxon>
        <taxon>Thermaceae</taxon>
        <taxon>Thermus</taxon>
    </lineage>
</organism>
<comment type="function">
    <text evidence="1">Catalyzes the reversible adenylation of nicotinate mononucleotide (NaMN) to nicotinic acid adenine dinucleotide (NaAD).</text>
</comment>
<comment type="catalytic activity">
    <reaction evidence="1">
        <text>nicotinate beta-D-ribonucleotide + ATP + H(+) = deamido-NAD(+) + diphosphate</text>
        <dbReference type="Rhea" id="RHEA:22860"/>
        <dbReference type="ChEBI" id="CHEBI:15378"/>
        <dbReference type="ChEBI" id="CHEBI:30616"/>
        <dbReference type="ChEBI" id="CHEBI:33019"/>
        <dbReference type="ChEBI" id="CHEBI:57502"/>
        <dbReference type="ChEBI" id="CHEBI:58437"/>
        <dbReference type="EC" id="2.7.7.18"/>
    </reaction>
</comment>
<comment type="pathway">
    <text evidence="1">Cofactor biosynthesis; NAD(+) biosynthesis; deamido-NAD(+) from nicotinate D-ribonucleotide: step 1/1.</text>
</comment>
<comment type="similarity">
    <text evidence="1">Belongs to the NadD family.</text>
</comment>
<accession>Q5SHF0</accession>
<name>NADD_THET8</name>